<accession>Q0TLT7</accession>
<evidence type="ECO:0000255" key="1">
    <source>
        <dbReference type="HAMAP-Rule" id="MF_00791"/>
    </source>
</evidence>
<proteinExistence type="inferred from homology"/>
<name>APAG_ECOL5</name>
<feature type="chain" id="PRO_1000083619" description="Protein ApaG">
    <location>
        <begin position="1"/>
        <end position="125"/>
    </location>
</feature>
<feature type="domain" description="ApaG" evidence="1">
    <location>
        <begin position="1"/>
        <end position="125"/>
    </location>
</feature>
<sequence length="125" mass="13867">MINSPRVCIQVQSVYIEAQSSPDNERYVFAYTVTIRNLGRAPVQLLGRYWLITNGNGRETEVQGEGVVGVQPLIAPGEEYQYTSGAIIETPLGTMQGHYEMIDENGVPFSIDIPVFRLAVPTLIH</sequence>
<dbReference type="EMBL" id="CP000247">
    <property type="protein sequence ID" value="ABG68094.1"/>
    <property type="molecule type" value="Genomic_DNA"/>
</dbReference>
<dbReference type="RefSeq" id="WP_000610901.1">
    <property type="nucleotide sequence ID" value="NC_008253.1"/>
</dbReference>
<dbReference type="SMR" id="Q0TLT7"/>
<dbReference type="GeneID" id="93777385"/>
<dbReference type="KEGG" id="ecp:ECP_0052"/>
<dbReference type="HOGENOM" id="CLU_128074_0_0_6"/>
<dbReference type="Proteomes" id="UP000009182">
    <property type="component" value="Chromosome"/>
</dbReference>
<dbReference type="GO" id="GO:0070987">
    <property type="term" value="P:error-free translesion synthesis"/>
    <property type="evidence" value="ECO:0007669"/>
    <property type="project" value="TreeGrafter"/>
</dbReference>
<dbReference type="Gene3D" id="2.60.40.1470">
    <property type="entry name" value="ApaG domain"/>
    <property type="match status" value="1"/>
</dbReference>
<dbReference type="HAMAP" id="MF_00791">
    <property type="entry name" value="ApaG"/>
    <property type="match status" value="1"/>
</dbReference>
<dbReference type="InterPro" id="IPR007474">
    <property type="entry name" value="ApaG_domain"/>
</dbReference>
<dbReference type="InterPro" id="IPR036767">
    <property type="entry name" value="ApaG_sf"/>
</dbReference>
<dbReference type="InterPro" id="IPR023065">
    <property type="entry name" value="Uncharacterised_ApaG"/>
</dbReference>
<dbReference type="NCBIfam" id="NF003967">
    <property type="entry name" value="PRK05461.1"/>
    <property type="match status" value="1"/>
</dbReference>
<dbReference type="PANTHER" id="PTHR14289">
    <property type="entry name" value="F-BOX ONLY PROTEIN 3"/>
    <property type="match status" value="1"/>
</dbReference>
<dbReference type="PANTHER" id="PTHR14289:SF16">
    <property type="entry name" value="POLYMERASE DELTA-INTERACTING PROTEIN 2"/>
    <property type="match status" value="1"/>
</dbReference>
<dbReference type="Pfam" id="PF04379">
    <property type="entry name" value="DUF525"/>
    <property type="match status" value="1"/>
</dbReference>
<dbReference type="SUPFAM" id="SSF110069">
    <property type="entry name" value="ApaG-like"/>
    <property type="match status" value="1"/>
</dbReference>
<dbReference type="PROSITE" id="PS51087">
    <property type="entry name" value="APAG"/>
    <property type="match status" value="1"/>
</dbReference>
<reference key="1">
    <citation type="journal article" date="2006" name="Mol. Microbiol.">
        <title>Role of pathogenicity island-associated integrases in the genome plasticity of uropathogenic Escherichia coli strain 536.</title>
        <authorList>
            <person name="Hochhut B."/>
            <person name="Wilde C."/>
            <person name="Balling G."/>
            <person name="Middendorf B."/>
            <person name="Dobrindt U."/>
            <person name="Brzuszkiewicz E."/>
            <person name="Gottschalk G."/>
            <person name="Carniel E."/>
            <person name="Hacker J."/>
        </authorList>
    </citation>
    <scope>NUCLEOTIDE SEQUENCE [LARGE SCALE GENOMIC DNA]</scope>
    <source>
        <strain>536 / UPEC</strain>
    </source>
</reference>
<gene>
    <name evidence="1" type="primary">apaG</name>
    <name type="ordered locus">ECP_0052</name>
</gene>
<organism>
    <name type="scientific">Escherichia coli O6:K15:H31 (strain 536 / UPEC)</name>
    <dbReference type="NCBI Taxonomy" id="362663"/>
    <lineage>
        <taxon>Bacteria</taxon>
        <taxon>Pseudomonadati</taxon>
        <taxon>Pseudomonadota</taxon>
        <taxon>Gammaproteobacteria</taxon>
        <taxon>Enterobacterales</taxon>
        <taxon>Enterobacteriaceae</taxon>
        <taxon>Escherichia</taxon>
    </lineage>
</organism>
<protein>
    <recommendedName>
        <fullName evidence="1">Protein ApaG</fullName>
    </recommendedName>
</protein>